<accession>Q3AGU1</accession>
<evidence type="ECO:0000255" key="1">
    <source>
        <dbReference type="HAMAP-Rule" id="MF_00145"/>
    </source>
</evidence>
<name>PGK_SYNSC</name>
<sequence length="401" mass="41749">MAKRSLASLNAGDLSGKRVLVRVDFNVPLNDTGAITDDTRIRAALPTINDLIGKGAKVILSAHFGRPKGQVNDAMRLTPVAARLSELLGKPVAKTDSCIGPDAEAKVGAMANGDVVLLENVRFFAEEEKNEAGFAEKLAGLAEVYVNDAFGAAHRAHASTEGVTKFLKPSVAGFLMEKELQYLQGAVDEPKRPLAAIVGGSKVSSKIGVLDTLIDKCDKVLIGGGMIFTFYKARGLSVGKSLVEEDKLELAKELEAKAKANGVQLLLPTDVVLADNFAPDANSQTADINAIPDGWMGLDIGPDSIKVFQEALADCQTVIWNGPMGVFEFDKFATGTNSIATTLADLSGKGCCTIIGGGDSVAAVEKAGLAEKMSHISTGGGASLELLEGKVLPGVAALDAA</sequence>
<keyword id="KW-0067">ATP-binding</keyword>
<keyword id="KW-0963">Cytoplasm</keyword>
<keyword id="KW-0324">Glycolysis</keyword>
<keyword id="KW-0418">Kinase</keyword>
<keyword id="KW-0547">Nucleotide-binding</keyword>
<keyword id="KW-0808">Transferase</keyword>
<comment type="catalytic activity">
    <reaction evidence="1">
        <text>(2R)-3-phosphoglycerate + ATP = (2R)-3-phospho-glyceroyl phosphate + ADP</text>
        <dbReference type="Rhea" id="RHEA:14801"/>
        <dbReference type="ChEBI" id="CHEBI:30616"/>
        <dbReference type="ChEBI" id="CHEBI:57604"/>
        <dbReference type="ChEBI" id="CHEBI:58272"/>
        <dbReference type="ChEBI" id="CHEBI:456216"/>
        <dbReference type="EC" id="2.7.2.3"/>
    </reaction>
</comment>
<comment type="pathway">
    <text evidence="1">Carbohydrate degradation; glycolysis; pyruvate from D-glyceraldehyde 3-phosphate: step 2/5.</text>
</comment>
<comment type="subunit">
    <text evidence="1">Monomer.</text>
</comment>
<comment type="subcellular location">
    <subcellularLocation>
        <location evidence="1">Cytoplasm</location>
    </subcellularLocation>
</comment>
<comment type="similarity">
    <text evidence="1">Belongs to the phosphoglycerate kinase family.</text>
</comment>
<gene>
    <name evidence="1" type="primary">pgk</name>
    <name type="ordered locus">Syncc9605_2459</name>
</gene>
<dbReference type="EC" id="2.7.2.3" evidence="1"/>
<dbReference type="EMBL" id="CP000110">
    <property type="protein sequence ID" value="ABB36191.1"/>
    <property type="molecule type" value="Genomic_DNA"/>
</dbReference>
<dbReference type="RefSeq" id="WP_011365387.1">
    <property type="nucleotide sequence ID" value="NC_007516.1"/>
</dbReference>
<dbReference type="SMR" id="Q3AGU1"/>
<dbReference type="STRING" id="110662.Syncc9605_2459"/>
<dbReference type="KEGG" id="syd:Syncc9605_2459"/>
<dbReference type="eggNOG" id="COG0126">
    <property type="taxonomic scope" value="Bacteria"/>
</dbReference>
<dbReference type="HOGENOM" id="CLU_025427_0_2_3"/>
<dbReference type="OrthoDB" id="9808460at2"/>
<dbReference type="UniPathway" id="UPA00109">
    <property type="reaction ID" value="UER00185"/>
</dbReference>
<dbReference type="GO" id="GO:0005829">
    <property type="term" value="C:cytosol"/>
    <property type="evidence" value="ECO:0007669"/>
    <property type="project" value="TreeGrafter"/>
</dbReference>
<dbReference type="GO" id="GO:0043531">
    <property type="term" value="F:ADP binding"/>
    <property type="evidence" value="ECO:0007669"/>
    <property type="project" value="TreeGrafter"/>
</dbReference>
<dbReference type="GO" id="GO:0005524">
    <property type="term" value="F:ATP binding"/>
    <property type="evidence" value="ECO:0007669"/>
    <property type="project" value="UniProtKB-KW"/>
</dbReference>
<dbReference type="GO" id="GO:0004618">
    <property type="term" value="F:phosphoglycerate kinase activity"/>
    <property type="evidence" value="ECO:0007669"/>
    <property type="project" value="UniProtKB-UniRule"/>
</dbReference>
<dbReference type="GO" id="GO:0006094">
    <property type="term" value="P:gluconeogenesis"/>
    <property type="evidence" value="ECO:0007669"/>
    <property type="project" value="TreeGrafter"/>
</dbReference>
<dbReference type="GO" id="GO:0006096">
    <property type="term" value="P:glycolytic process"/>
    <property type="evidence" value="ECO:0007669"/>
    <property type="project" value="UniProtKB-UniRule"/>
</dbReference>
<dbReference type="CDD" id="cd00318">
    <property type="entry name" value="Phosphoglycerate_kinase"/>
    <property type="match status" value="1"/>
</dbReference>
<dbReference type="FunFam" id="3.40.50.1260:FF:000003">
    <property type="entry name" value="Phosphoglycerate kinase"/>
    <property type="match status" value="1"/>
</dbReference>
<dbReference type="FunFam" id="3.40.50.1260:FF:000006">
    <property type="entry name" value="Phosphoglycerate kinase"/>
    <property type="match status" value="1"/>
</dbReference>
<dbReference type="Gene3D" id="3.40.50.1260">
    <property type="entry name" value="Phosphoglycerate kinase, N-terminal domain"/>
    <property type="match status" value="2"/>
</dbReference>
<dbReference type="HAMAP" id="MF_00145">
    <property type="entry name" value="Phosphoglyc_kinase"/>
    <property type="match status" value="1"/>
</dbReference>
<dbReference type="InterPro" id="IPR001576">
    <property type="entry name" value="Phosphoglycerate_kinase"/>
</dbReference>
<dbReference type="InterPro" id="IPR015911">
    <property type="entry name" value="Phosphoglycerate_kinase_CS"/>
</dbReference>
<dbReference type="InterPro" id="IPR015824">
    <property type="entry name" value="Phosphoglycerate_kinase_N"/>
</dbReference>
<dbReference type="InterPro" id="IPR036043">
    <property type="entry name" value="Phosphoglycerate_kinase_sf"/>
</dbReference>
<dbReference type="PANTHER" id="PTHR11406">
    <property type="entry name" value="PHOSPHOGLYCERATE KINASE"/>
    <property type="match status" value="1"/>
</dbReference>
<dbReference type="PANTHER" id="PTHR11406:SF23">
    <property type="entry name" value="PHOSPHOGLYCERATE KINASE 1, CHLOROPLASTIC-RELATED"/>
    <property type="match status" value="1"/>
</dbReference>
<dbReference type="Pfam" id="PF00162">
    <property type="entry name" value="PGK"/>
    <property type="match status" value="1"/>
</dbReference>
<dbReference type="PIRSF" id="PIRSF000724">
    <property type="entry name" value="Pgk"/>
    <property type="match status" value="1"/>
</dbReference>
<dbReference type="PRINTS" id="PR00477">
    <property type="entry name" value="PHGLYCKINASE"/>
</dbReference>
<dbReference type="SUPFAM" id="SSF53748">
    <property type="entry name" value="Phosphoglycerate kinase"/>
    <property type="match status" value="1"/>
</dbReference>
<dbReference type="PROSITE" id="PS00111">
    <property type="entry name" value="PGLYCERATE_KINASE"/>
    <property type="match status" value="1"/>
</dbReference>
<organism>
    <name type="scientific">Synechococcus sp. (strain CC9605)</name>
    <dbReference type="NCBI Taxonomy" id="110662"/>
    <lineage>
        <taxon>Bacteria</taxon>
        <taxon>Bacillati</taxon>
        <taxon>Cyanobacteriota</taxon>
        <taxon>Cyanophyceae</taxon>
        <taxon>Synechococcales</taxon>
        <taxon>Synechococcaceae</taxon>
        <taxon>Synechococcus</taxon>
    </lineage>
</organism>
<protein>
    <recommendedName>
        <fullName evidence="1">Phosphoglycerate kinase</fullName>
        <ecNumber evidence="1">2.7.2.3</ecNumber>
    </recommendedName>
</protein>
<proteinExistence type="inferred from homology"/>
<feature type="chain" id="PRO_1000058083" description="Phosphoglycerate kinase">
    <location>
        <begin position="1"/>
        <end position="401"/>
    </location>
</feature>
<feature type="binding site" evidence="1">
    <location>
        <begin position="24"/>
        <end position="26"/>
    </location>
    <ligand>
        <name>substrate</name>
    </ligand>
</feature>
<feature type="binding site" evidence="1">
    <location>
        <position position="40"/>
    </location>
    <ligand>
        <name>substrate</name>
    </ligand>
</feature>
<feature type="binding site" evidence="1">
    <location>
        <begin position="63"/>
        <end position="66"/>
    </location>
    <ligand>
        <name>substrate</name>
    </ligand>
</feature>
<feature type="binding site" evidence="1">
    <location>
        <position position="122"/>
    </location>
    <ligand>
        <name>substrate</name>
    </ligand>
</feature>
<feature type="binding site" evidence="1">
    <location>
        <position position="155"/>
    </location>
    <ligand>
        <name>substrate</name>
    </ligand>
</feature>
<feature type="binding site" evidence="1">
    <location>
        <position position="206"/>
    </location>
    <ligand>
        <name>ATP</name>
        <dbReference type="ChEBI" id="CHEBI:30616"/>
    </ligand>
</feature>
<feature type="binding site" evidence="1">
    <location>
        <position position="297"/>
    </location>
    <ligand>
        <name>ATP</name>
        <dbReference type="ChEBI" id="CHEBI:30616"/>
    </ligand>
</feature>
<feature type="binding site" evidence="1">
    <location>
        <position position="328"/>
    </location>
    <ligand>
        <name>ATP</name>
        <dbReference type="ChEBI" id="CHEBI:30616"/>
    </ligand>
</feature>
<feature type="binding site" evidence="1">
    <location>
        <begin position="357"/>
        <end position="360"/>
    </location>
    <ligand>
        <name>ATP</name>
        <dbReference type="ChEBI" id="CHEBI:30616"/>
    </ligand>
</feature>
<reference key="1">
    <citation type="submission" date="2005-07" db="EMBL/GenBank/DDBJ databases">
        <title>Complete sequence of Synechococcus sp. CC9605.</title>
        <authorList>
            <consortium name="US DOE Joint Genome Institute"/>
            <person name="Copeland A."/>
            <person name="Lucas S."/>
            <person name="Lapidus A."/>
            <person name="Barry K."/>
            <person name="Detter J.C."/>
            <person name="Glavina T."/>
            <person name="Hammon N."/>
            <person name="Israni S."/>
            <person name="Pitluck S."/>
            <person name="Schmutz J."/>
            <person name="Martinez M."/>
            <person name="Larimer F."/>
            <person name="Land M."/>
            <person name="Kyrpides N."/>
            <person name="Ivanova N."/>
            <person name="Richardson P."/>
        </authorList>
    </citation>
    <scope>NUCLEOTIDE SEQUENCE [LARGE SCALE GENOMIC DNA]</scope>
    <source>
        <strain>CC9605</strain>
    </source>
</reference>